<feature type="chain" id="PRO_1000125148" description="Fluoride-specific ion channel FluC">
    <location>
        <begin position="1"/>
        <end position="125"/>
    </location>
</feature>
<feature type="transmembrane region" description="Helical" evidence="1">
    <location>
        <begin position="1"/>
        <end position="21"/>
    </location>
</feature>
<feature type="transmembrane region" description="Helical" evidence="1">
    <location>
        <begin position="32"/>
        <end position="52"/>
    </location>
</feature>
<feature type="transmembrane region" description="Helical" evidence="1">
    <location>
        <begin position="68"/>
        <end position="88"/>
    </location>
</feature>
<feature type="transmembrane region" description="Helical" evidence="1">
    <location>
        <begin position="101"/>
        <end position="121"/>
    </location>
</feature>
<feature type="binding site" evidence="1">
    <location>
        <position position="75"/>
    </location>
    <ligand>
        <name>Na(+)</name>
        <dbReference type="ChEBI" id="CHEBI:29101"/>
        <note>structural</note>
    </ligand>
</feature>
<feature type="binding site" evidence="1">
    <location>
        <position position="78"/>
    </location>
    <ligand>
        <name>Na(+)</name>
        <dbReference type="ChEBI" id="CHEBI:29101"/>
        <note>structural</note>
    </ligand>
</feature>
<reference key="1">
    <citation type="journal article" date="2010" name="Appl. Environ. Microbiol.">
        <title>Conserved symbiotic plasmid DNA sequences in the multireplicon pangenomic structure of Rhizobium etli.</title>
        <authorList>
            <person name="Gonzalez V."/>
            <person name="Acosta J.L."/>
            <person name="Santamaria R.I."/>
            <person name="Bustos P."/>
            <person name="Fernandez J.L."/>
            <person name="Hernandez Gonzalez I.L."/>
            <person name="Diaz R."/>
            <person name="Flores M."/>
            <person name="Palacios R."/>
            <person name="Mora J."/>
            <person name="Davila G."/>
        </authorList>
    </citation>
    <scope>NUCLEOTIDE SEQUENCE [LARGE SCALE GENOMIC DNA]</scope>
    <source>
        <strain>CIAT 652</strain>
    </source>
</reference>
<protein>
    <recommendedName>
        <fullName evidence="1">Fluoride-specific ion channel FluC</fullName>
    </recommendedName>
</protein>
<organism>
    <name type="scientific">Rhizobium etli (strain CIAT 652)</name>
    <dbReference type="NCBI Taxonomy" id="491916"/>
    <lineage>
        <taxon>Bacteria</taxon>
        <taxon>Pseudomonadati</taxon>
        <taxon>Pseudomonadota</taxon>
        <taxon>Alphaproteobacteria</taxon>
        <taxon>Hyphomicrobiales</taxon>
        <taxon>Rhizobiaceae</taxon>
        <taxon>Rhizobium/Agrobacterium group</taxon>
        <taxon>Rhizobium</taxon>
    </lineage>
</organism>
<sequence>MIQAFLVALGGAIGSVLRYYVGQWALRLMGPAFPWGTLAVNVVGCFVIGVFAELIARRFNASMELRLLLITGFLGGFTTFSAFSLDAISLFERGEAVAGGIYIAASVGLSMAAVISGLAVMRALA</sequence>
<evidence type="ECO:0000255" key="1">
    <source>
        <dbReference type="HAMAP-Rule" id="MF_00454"/>
    </source>
</evidence>
<gene>
    <name evidence="1" type="primary">fluC</name>
    <name evidence="1" type="synonym">crcB</name>
    <name type="ordered locus">RHECIAT_CH0002346</name>
</gene>
<accession>B3PP14</accession>
<comment type="function">
    <text evidence="1">Fluoride-specific ion channel. Important for reducing fluoride concentration in the cell, thus reducing its toxicity.</text>
</comment>
<comment type="catalytic activity">
    <reaction evidence="1">
        <text>fluoride(in) = fluoride(out)</text>
        <dbReference type="Rhea" id="RHEA:76159"/>
        <dbReference type="ChEBI" id="CHEBI:17051"/>
    </reaction>
    <physiologicalReaction direction="left-to-right" evidence="1">
        <dbReference type="Rhea" id="RHEA:76160"/>
    </physiologicalReaction>
</comment>
<comment type="activity regulation">
    <text evidence="1">Na(+) is not transported, but it plays an essential structural role and its presence is essential for fluoride channel function.</text>
</comment>
<comment type="subcellular location">
    <subcellularLocation>
        <location evidence="1">Cell inner membrane</location>
        <topology evidence="1">Multi-pass membrane protein</topology>
    </subcellularLocation>
</comment>
<comment type="similarity">
    <text evidence="1">Belongs to the fluoride channel Fluc/FEX (TC 1.A.43) family.</text>
</comment>
<name>FLUC_RHIE6</name>
<dbReference type="EMBL" id="CP001074">
    <property type="protein sequence ID" value="ACE91300.1"/>
    <property type="molecule type" value="Genomic_DNA"/>
</dbReference>
<dbReference type="SMR" id="B3PP14"/>
<dbReference type="KEGG" id="rec:RHECIAT_CH0002346"/>
<dbReference type="eggNOG" id="COG0239">
    <property type="taxonomic scope" value="Bacteria"/>
</dbReference>
<dbReference type="HOGENOM" id="CLU_114342_2_3_5"/>
<dbReference type="Proteomes" id="UP000008817">
    <property type="component" value="Chromosome"/>
</dbReference>
<dbReference type="GO" id="GO:0005886">
    <property type="term" value="C:plasma membrane"/>
    <property type="evidence" value="ECO:0007669"/>
    <property type="project" value="UniProtKB-SubCell"/>
</dbReference>
<dbReference type="GO" id="GO:0062054">
    <property type="term" value="F:fluoride channel activity"/>
    <property type="evidence" value="ECO:0007669"/>
    <property type="project" value="UniProtKB-UniRule"/>
</dbReference>
<dbReference type="GO" id="GO:0046872">
    <property type="term" value="F:metal ion binding"/>
    <property type="evidence" value="ECO:0007669"/>
    <property type="project" value="UniProtKB-KW"/>
</dbReference>
<dbReference type="GO" id="GO:0140114">
    <property type="term" value="P:cellular detoxification of fluoride"/>
    <property type="evidence" value="ECO:0007669"/>
    <property type="project" value="UniProtKB-UniRule"/>
</dbReference>
<dbReference type="HAMAP" id="MF_00454">
    <property type="entry name" value="FluC"/>
    <property type="match status" value="1"/>
</dbReference>
<dbReference type="InterPro" id="IPR003691">
    <property type="entry name" value="FluC"/>
</dbReference>
<dbReference type="NCBIfam" id="TIGR00494">
    <property type="entry name" value="crcB"/>
    <property type="match status" value="1"/>
</dbReference>
<dbReference type="NCBIfam" id="NF010791">
    <property type="entry name" value="PRK14195.1"/>
    <property type="match status" value="1"/>
</dbReference>
<dbReference type="PANTHER" id="PTHR28259">
    <property type="entry name" value="FLUORIDE EXPORT PROTEIN 1-RELATED"/>
    <property type="match status" value="1"/>
</dbReference>
<dbReference type="PANTHER" id="PTHR28259:SF1">
    <property type="entry name" value="FLUORIDE EXPORT PROTEIN 1-RELATED"/>
    <property type="match status" value="1"/>
</dbReference>
<dbReference type="Pfam" id="PF02537">
    <property type="entry name" value="CRCB"/>
    <property type="match status" value="1"/>
</dbReference>
<keyword id="KW-0997">Cell inner membrane</keyword>
<keyword id="KW-1003">Cell membrane</keyword>
<keyword id="KW-0407">Ion channel</keyword>
<keyword id="KW-0406">Ion transport</keyword>
<keyword id="KW-0472">Membrane</keyword>
<keyword id="KW-0479">Metal-binding</keyword>
<keyword id="KW-0915">Sodium</keyword>
<keyword id="KW-0812">Transmembrane</keyword>
<keyword id="KW-1133">Transmembrane helix</keyword>
<keyword id="KW-0813">Transport</keyword>
<proteinExistence type="inferred from homology"/>